<protein>
    <recommendedName>
        <fullName evidence="1">Urease accessory protein UreD</fullName>
    </recommendedName>
</protein>
<gene>
    <name evidence="1" type="primary">ureD</name>
    <name type="ordered locus">PP_2842</name>
</gene>
<proteinExistence type="inferred from homology"/>
<accession>Q88J07</accession>
<name>URED_PSEPK</name>
<comment type="function">
    <text evidence="1">Required for maturation of urease via the functional incorporation of the urease nickel metallocenter.</text>
</comment>
<comment type="subunit">
    <text evidence="1">UreD, UreF and UreG form a complex that acts as a GTP-hydrolysis-dependent molecular chaperone, activating the urease apoprotein by helping to assemble the nickel containing metallocenter of UreC. The UreE protein probably delivers the nickel.</text>
</comment>
<comment type="subcellular location">
    <subcellularLocation>
        <location evidence="1">Cytoplasm</location>
    </subcellularLocation>
</comment>
<comment type="similarity">
    <text evidence="1">Belongs to the UreD family.</text>
</comment>
<reference key="1">
    <citation type="journal article" date="2002" name="Environ. Microbiol.">
        <title>Complete genome sequence and comparative analysis of the metabolically versatile Pseudomonas putida KT2440.</title>
        <authorList>
            <person name="Nelson K.E."/>
            <person name="Weinel C."/>
            <person name="Paulsen I.T."/>
            <person name="Dodson R.J."/>
            <person name="Hilbert H."/>
            <person name="Martins dos Santos V.A.P."/>
            <person name="Fouts D.E."/>
            <person name="Gill S.R."/>
            <person name="Pop M."/>
            <person name="Holmes M."/>
            <person name="Brinkac L.M."/>
            <person name="Beanan M.J."/>
            <person name="DeBoy R.T."/>
            <person name="Daugherty S.C."/>
            <person name="Kolonay J.F."/>
            <person name="Madupu R."/>
            <person name="Nelson W.C."/>
            <person name="White O."/>
            <person name="Peterson J.D."/>
            <person name="Khouri H.M."/>
            <person name="Hance I."/>
            <person name="Chris Lee P."/>
            <person name="Holtzapple E.K."/>
            <person name="Scanlan D."/>
            <person name="Tran K."/>
            <person name="Moazzez A."/>
            <person name="Utterback T.R."/>
            <person name="Rizzo M."/>
            <person name="Lee K."/>
            <person name="Kosack D."/>
            <person name="Moestl D."/>
            <person name="Wedler H."/>
            <person name="Lauber J."/>
            <person name="Stjepandic D."/>
            <person name="Hoheisel J."/>
            <person name="Straetz M."/>
            <person name="Heim S."/>
            <person name="Kiewitz C."/>
            <person name="Eisen J.A."/>
            <person name="Timmis K.N."/>
            <person name="Duesterhoeft A."/>
            <person name="Tuemmler B."/>
            <person name="Fraser C.M."/>
        </authorList>
    </citation>
    <scope>NUCLEOTIDE SEQUENCE [LARGE SCALE GENOMIC DNA]</scope>
    <source>
        <strain>ATCC 47054 / DSM 6125 / CFBP 8728 / NCIMB 11950 / KT2440</strain>
    </source>
</reference>
<sequence length="277" mass="30523">MSLAEQIEQQQDDAGWSAHLQLRFVQRDGVTRLGAWKHFGPLLVQRPFYPEGAPCHVYVLHPPGGIVAGDRLELDIHLEPGSHALLTMPGASKFYRSIGPTARLAQRFHLAAGSTLEWLPQDSIFFSGARASLASRFTLEPGARLLAWETLCLGRPVMHERFDHGALDSLLHIELPDEVGLHERLRLEGGHLGKLGGHPLLATFCAAPANQAVLEQVRPLLDELGNPAGATLLGSLLVIRVLDHDNQHLQRTLQRLWHVLRPAILGLPACPPRIWAT</sequence>
<keyword id="KW-0143">Chaperone</keyword>
<keyword id="KW-0963">Cytoplasm</keyword>
<keyword id="KW-0996">Nickel insertion</keyword>
<keyword id="KW-1185">Reference proteome</keyword>
<dbReference type="EMBL" id="AE015451">
    <property type="protein sequence ID" value="AAN68450.1"/>
    <property type="molecule type" value="Genomic_DNA"/>
</dbReference>
<dbReference type="RefSeq" id="NP_744986.1">
    <property type="nucleotide sequence ID" value="NC_002947.4"/>
</dbReference>
<dbReference type="RefSeq" id="WP_010953751.1">
    <property type="nucleotide sequence ID" value="NZ_CP169744.1"/>
</dbReference>
<dbReference type="SMR" id="Q88J07"/>
<dbReference type="STRING" id="160488.PP_2842"/>
<dbReference type="PaxDb" id="160488-PP_2842"/>
<dbReference type="KEGG" id="ppu:PP_2842"/>
<dbReference type="PATRIC" id="fig|160488.4.peg.3015"/>
<dbReference type="eggNOG" id="COG0829">
    <property type="taxonomic scope" value="Bacteria"/>
</dbReference>
<dbReference type="HOGENOM" id="CLU_056339_0_0_6"/>
<dbReference type="OrthoDB" id="9798842at2"/>
<dbReference type="PhylomeDB" id="Q88J07"/>
<dbReference type="BioCyc" id="PPUT160488:G1G01-3022-MONOMER"/>
<dbReference type="Proteomes" id="UP000000556">
    <property type="component" value="Chromosome"/>
</dbReference>
<dbReference type="GO" id="GO:0005737">
    <property type="term" value="C:cytoplasm"/>
    <property type="evidence" value="ECO:0007669"/>
    <property type="project" value="UniProtKB-SubCell"/>
</dbReference>
<dbReference type="GO" id="GO:0016151">
    <property type="term" value="F:nickel cation binding"/>
    <property type="evidence" value="ECO:0007669"/>
    <property type="project" value="UniProtKB-UniRule"/>
</dbReference>
<dbReference type="HAMAP" id="MF_01384">
    <property type="entry name" value="UreD"/>
    <property type="match status" value="1"/>
</dbReference>
<dbReference type="InterPro" id="IPR002669">
    <property type="entry name" value="UreD"/>
</dbReference>
<dbReference type="PANTHER" id="PTHR33643">
    <property type="entry name" value="UREASE ACCESSORY PROTEIN D"/>
    <property type="match status" value="1"/>
</dbReference>
<dbReference type="PANTHER" id="PTHR33643:SF1">
    <property type="entry name" value="UREASE ACCESSORY PROTEIN D"/>
    <property type="match status" value="1"/>
</dbReference>
<dbReference type="Pfam" id="PF01774">
    <property type="entry name" value="UreD"/>
    <property type="match status" value="1"/>
</dbReference>
<organism>
    <name type="scientific">Pseudomonas putida (strain ATCC 47054 / DSM 6125 / CFBP 8728 / NCIMB 11950 / KT2440)</name>
    <dbReference type="NCBI Taxonomy" id="160488"/>
    <lineage>
        <taxon>Bacteria</taxon>
        <taxon>Pseudomonadati</taxon>
        <taxon>Pseudomonadota</taxon>
        <taxon>Gammaproteobacteria</taxon>
        <taxon>Pseudomonadales</taxon>
        <taxon>Pseudomonadaceae</taxon>
        <taxon>Pseudomonas</taxon>
    </lineage>
</organism>
<evidence type="ECO:0000255" key="1">
    <source>
        <dbReference type="HAMAP-Rule" id="MF_01384"/>
    </source>
</evidence>
<feature type="chain" id="PRO_0000340491" description="Urease accessory protein UreD">
    <location>
        <begin position="1"/>
        <end position="277"/>
    </location>
</feature>